<accession>P00689</accession>
<keyword id="KW-0106">Calcium</keyword>
<keyword id="KW-0119">Carbohydrate metabolism</keyword>
<keyword id="KW-0868">Chloride</keyword>
<keyword id="KW-1015">Disulfide bond</keyword>
<keyword id="KW-0326">Glycosidase</keyword>
<keyword id="KW-0378">Hydrolase</keyword>
<keyword id="KW-0479">Metal-binding</keyword>
<keyword id="KW-0873">Pyrrolidone carboxylic acid</keyword>
<keyword id="KW-1185">Reference proteome</keyword>
<keyword id="KW-0964">Secreted</keyword>
<keyword id="KW-0732">Signal</keyword>
<organism>
    <name type="scientific">Rattus norvegicus</name>
    <name type="common">Rat</name>
    <dbReference type="NCBI Taxonomy" id="10116"/>
    <lineage>
        <taxon>Eukaryota</taxon>
        <taxon>Metazoa</taxon>
        <taxon>Chordata</taxon>
        <taxon>Craniata</taxon>
        <taxon>Vertebrata</taxon>
        <taxon>Euteleostomi</taxon>
        <taxon>Mammalia</taxon>
        <taxon>Eutheria</taxon>
        <taxon>Euarchontoglires</taxon>
        <taxon>Glires</taxon>
        <taxon>Rodentia</taxon>
        <taxon>Myomorpha</taxon>
        <taxon>Muroidea</taxon>
        <taxon>Muridae</taxon>
        <taxon>Murinae</taxon>
        <taxon>Rattus</taxon>
    </lineage>
</organism>
<evidence type="ECO:0000250" key="1"/>
<evidence type="ECO:0000250" key="2">
    <source>
        <dbReference type="UniProtKB" id="P04746"/>
    </source>
</evidence>
<evidence type="ECO:0000305" key="3"/>
<sequence>MKFVLLLSLIGFCWAQYDPHTADGRTAIVHLFEWRWADIAKECERYLAPKGFGGVQVSPPNENIIINNPSRPWWERYQPISYKICSRSGNENEFKDMVTRCNNVGVRIYVDAVINHMCGSGNSAGTHSTCGSYFNPNNREFSAVPYSAWYFNDNKCNGEINNYNDANQVRNCRLSGLLDLALDKDYVRTKVADYMNNLIDIGVAGFRLDAAKHMWPGDIKAVLDKLHNLNTKWFSQGSRPFIFQEVIDLGGEAIKGSEYFGNGRVTEFKYGAKLGTVIRKWNGEKMSYLKNWGEGWGFVPTDRALVFVDNHDNQRGHGAGGASILTFWDARMYKMAVGFMLAHPYGFTRVMSSYRRTRNFQNGKDVNDWIGPPNNNGVTKEVTINPDTTCGNDWVCEHRWRQIRNMVAFRNVVNGQPFANWWDNGSNQVAFSRGNRGFIVFNNDDWALSSTLQTGLPAGTYCDVISGDKVNGNCTGLKVNVGSDGKAHFSISNSAEDPFIAIHADSKL</sequence>
<dbReference type="EC" id="3.2.1.1" evidence="2"/>
<dbReference type="EMBL" id="J00703">
    <property type="protein sequence ID" value="AAA40725.2"/>
    <property type="molecule type" value="mRNA"/>
</dbReference>
<dbReference type="PIR" id="A00840">
    <property type="entry name" value="ALRTP"/>
</dbReference>
<dbReference type="RefSeq" id="NP_113690.1">
    <property type="nucleotide sequence ID" value="NM_031502.1"/>
</dbReference>
<dbReference type="SMR" id="P00689"/>
<dbReference type="FunCoup" id="P00689">
    <property type="interactions" value="72"/>
</dbReference>
<dbReference type="IntAct" id="P00689">
    <property type="interactions" value="1"/>
</dbReference>
<dbReference type="STRING" id="10116.ENSRNOP00000073932"/>
<dbReference type="BindingDB" id="P00689"/>
<dbReference type="ChEMBL" id="CHEMBL2699"/>
<dbReference type="DrugCentral" id="P00689"/>
<dbReference type="CAZy" id="GH13">
    <property type="family name" value="Glycoside Hydrolase Family 13"/>
</dbReference>
<dbReference type="iPTMnet" id="P00689"/>
<dbReference type="PhosphoSitePlus" id="P00689"/>
<dbReference type="PaxDb" id="10116-ENSRNOP00000022268"/>
<dbReference type="GeneID" id="497039"/>
<dbReference type="KEGG" id="rno:497039"/>
<dbReference type="UCSC" id="RGD:1593187">
    <property type="organism name" value="rat"/>
</dbReference>
<dbReference type="AGR" id="RGD:1593187"/>
<dbReference type="AGR" id="RGD:41131609"/>
<dbReference type="CTD" id="100043686"/>
<dbReference type="RGD" id="1593187">
    <property type="gene designation" value="Amy2"/>
</dbReference>
<dbReference type="eggNOG" id="KOG2212">
    <property type="taxonomic scope" value="Eukaryota"/>
</dbReference>
<dbReference type="InParanoid" id="P00689"/>
<dbReference type="PhylomeDB" id="P00689"/>
<dbReference type="PRO" id="PR:P00689"/>
<dbReference type="Proteomes" id="UP000002494">
    <property type="component" value="Unplaced"/>
</dbReference>
<dbReference type="GO" id="GO:0005615">
    <property type="term" value="C:extracellular space"/>
    <property type="evidence" value="ECO:0000250"/>
    <property type="project" value="UniProtKB"/>
</dbReference>
<dbReference type="GO" id="GO:0004556">
    <property type="term" value="F:alpha-amylase activity"/>
    <property type="evidence" value="ECO:0000314"/>
    <property type="project" value="CACAO"/>
</dbReference>
<dbReference type="GO" id="GO:0005509">
    <property type="term" value="F:calcium ion binding"/>
    <property type="evidence" value="ECO:0000250"/>
    <property type="project" value="UniProtKB"/>
</dbReference>
<dbReference type="GO" id="GO:0031404">
    <property type="term" value="F:chloride ion binding"/>
    <property type="evidence" value="ECO:0000250"/>
    <property type="project" value="UniProtKB"/>
</dbReference>
<dbReference type="GO" id="GO:0016052">
    <property type="term" value="P:carbohydrate catabolic process"/>
    <property type="evidence" value="ECO:0000250"/>
    <property type="project" value="UniProtKB"/>
</dbReference>
<dbReference type="GO" id="GO:0005975">
    <property type="term" value="P:carbohydrate metabolic process"/>
    <property type="evidence" value="ECO:0000318"/>
    <property type="project" value="GO_Central"/>
</dbReference>
<dbReference type="CDD" id="cd11317">
    <property type="entry name" value="AmyAc_bac_euk_AmyA"/>
    <property type="match status" value="1"/>
</dbReference>
<dbReference type="FunFam" id="2.60.40.1180:FF:000020">
    <property type="entry name" value="Pancreatic alpha-amylase"/>
    <property type="match status" value="1"/>
</dbReference>
<dbReference type="FunFam" id="3.20.20.80:FF:000056">
    <property type="entry name" value="Pancreatic alpha-amylase"/>
    <property type="match status" value="1"/>
</dbReference>
<dbReference type="Gene3D" id="3.20.20.80">
    <property type="entry name" value="Glycosidases"/>
    <property type="match status" value="1"/>
</dbReference>
<dbReference type="Gene3D" id="2.60.40.1180">
    <property type="entry name" value="Golgi alpha-mannosidase II"/>
    <property type="match status" value="1"/>
</dbReference>
<dbReference type="InterPro" id="IPR006048">
    <property type="entry name" value="A-amylase/branching_C"/>
</dbReference>
<dbReference type="InterPro" id="IPR031319">
    <property type="entry name" value="A-amylase_C"/>
</dbReference>
<dbReference type="InterPro" id="IPR006046">
    <property type="entry name" value="Alpha_amylase"/>
</dbReference>
<dbReference type="InterPro" id="IPR006047">
    <property type="entry name" value="Glyco_hydro_13_cat_dom"/>
</dbReference>
<dbReference type="InterPro" id="IPR013780">
    <property type="entry name" value="Glyco_hydro_b"/>
</dbReference>
<dbReference type="InterPro" id="IPR017853">
    <property type="entry name" value="Glycoside_hydrolase_SF"/>
</dbReference>
<dbReference type="PANTHER" id="PTHR43447">
    <property type="entry name" value="ALPHA-AMYLASE"/>
    <property type="match status" value="1"/>
</dbReference>
<dbReference type="Pfam" id="PF00128">
    <property type="entry name" value="Alpha-amylase"/>
    <property type="match status" value="1"/>
</dbReference>
<dbReference type="Pfam" id="PF02806">
    <property type="entry name" value="Alpha-amylase_C"/>
    <property type="match status" value="1"/>
</dbReference>
<dbReference type="PRINTS" id="PR00110">
    <property type="entry name" value="ALPHAAMYLASE"/>
</dbReference>
<dbReference type="SMART" id="SM00642">
    <property type="entry name" value="Aamy"/>
    <property type="match status" value="1"/>
</dbReference>
<dbReference type="SMART" id="SM00632">
    <property type="entry name" value="Aamy_C"/>
    <property type="match status" value="1"/>
</dbReference>
<dbReference type="SUPFAM" id="SSF51445">
    <property type="entry name" value="(Trans)glycosidases"/>
    <property type="match status" value="1"/>
</dbReference>
<dbReference type="SUPFAM" id="SSF51011">
    <property type="entry name" value="Glycosyl hydrolase domain"/>
    <property type="match status" value="1"/>
</dbReference>
<gene>
    <name type="primary">Amy2</name>
</gene>
<feature type="signal peptide">
    <location>
        <begin position="1"/>
        <end position="15"/>
    </location>
</feature>
<feature type="chain" id="PRO_0000001400" description="Pancreatic alpha-amylase">
    <location>
        <begin position="16"/>
        <end position="508"/>
    </location>
</feature>
<feature type="active site" description="Nucleophile" evidence="2">
    <location>
        <position position="209"/>
    </location>
</feature>
<feature type="active site" description="Proton donor" evidence="2">
    <location>
        <position position="245"/>
    </location>
</feature>
<feature type="binding site" evidence="2">
    <location>
        <position position="115"/>
    </location>
    <ligand>
        <name>Ca(2+)</name>
        <dbReference type="ChEBI" id="CHEBI:29108"/>
    </ligand>
</feature>
<feature type="binding site" evidence="2">
    <location>
        <position position="170"/>
    </location>
    <ligand>
        <name>Ca(2+)</name>
        <dbReference type="ChEBI" id="CHEBI:29108"/>
    </ligand>
</feature>
<feature type="binding site" evidence="2">
    <location>
        <position position="179"/>
    </location>
    <ligand>
        <name>Ca(2+)</name>
        <dbReference type="ChEBI" id="CHEBI:29108"/>
    </ligand>
</feature>
<feature type="binding site" evidence="2">
    <location>
        <position position="207"/>
    </location>
    <ligand>
        <name>chloride</name>
        <dbReference type="ChEBI" id="CHEBI:17996"/>
    </ligand>
</feature>
<feature type="binding site" evidence="2">
    <location>
        <position position="213"/>
    </location>
    <ligand>
        <name>Ca(2+)</name>
        <dbReference type="ChEBI" id="CHEBI:29108"/>
    </ligand>
</feature>
<feature type="binding site" evidence="2">
    <location>
        <position position="310"/>
    </location>
    <ligand>
        <name>chloride</name>
        <dbReference type="ChEBI" id="CHEBI:17996"/>
    </ligand>
</feature>
<feature type="binding site" evidence="2">
    <location>
        <position position="349"/>
    </location>
    <ligand>
        <name>chloride</name>
        <dbReference type="ChEBI" id="CHEBI:17996"/>
    </ligand>
</feature>
<feature type="site" description="Transition state stabilizer" evidence="2">
    <location>
        <position position="312"/>
    </location>
</feature>
<feature type="modified residue" description="Pyrrolidone carboxylic acid" evidence="2">
    <location>
        <position position="16"/>
    </location>
</feature>
<feature type="disulfide bond" evidence="2">
    <location>
        <begin position="43"/>
        <end position="101"/>
    </location>
</feature>
<feature type="disulfide bond" evidence="2">
    <location>
        <begin position="85"/>
        <end position="130"/>
    </location>
</feature>
<feature type="disulfide bond" evidence="2">
    <location>
        <begin position="156"/>
        <end position="172"/>
    </location>
</feature>
<feature type="disulfide bond" evidence="2">
    <location>
        <begin position="390"/>
        <end position="396"/>
    </location>
</feature>
<feature type="disulfide bond" evidence="2">
    <location>
        <begin position="462"/>
        <end position="474"/>
    </location>
</feature>
<protein>
    <recommendedName>
        <fullName>Pancreatic alpha-amylase</fullName>
        <shortName>PA</shortName>
        <ecNumber evidence="2">3.2.1.1</ecNumber>
    </recommendedName>
    <alternativeName>
        <fullName>1,4-alpha-D-glucan glucanohydrolase</fullName>
    </alternativeName>
</protein>
<comment type="catalytic activity">
    <reaction evidence="2">
        <text>Endohydrolysis of (1-&gt;4)-alpha-D-glucosidic linkages in polysaccharides containing three or more (1-&gt;4)-alpha-linked D-glucose units.</text>
        <dbReference type="EC" id="3.2.1.1"/>
    </reaction>
</comment>
<comment type="cofactor">
    <cofactor evidence="2">
        <name>Ca(2+)</name>
        <dbReference type="ChEBI" id="CHEBI:29108"/>
    </cofactor>
    <text evidence="2">Binds 1 Ca(2+) ion per subunit.</text>
</comment>
<comment type="cofactor">
    <cofactor evidence="2">
        <name>chloride</name>
        <dbReference type="ChEBI" id="CHEBI:17996"/>
    </cofactor>
    <text evidence="2">Binds 1 Cl(-) ion per subunit.</text>
</comment>
<comment type="subunit">
    <text evidence="1">Monomer.</text>
</comment>
<comment type="subcellular location">
    <subcellularLocation>
        <location>Secreted</location>
        <location>Extracellular space</location>
    </subcellularLocation>
</comment>
<comment type="similarity">
    <text evidence="3">Belongs to the glycosyl hydrolase 13 family.</text>
</comment>
<reference key="1">
    <citation type="submission" date="2000-12" db="EMBL/GenBank/DDBJ databases">
        <authorList>
            <person name="MacDonald R."/>
        </authorList>
    </citation>
    <scope>NUCLEOTIDE SEQUENCE [MRNA]</scope>
</reference>
<reference key="2">
    <citation type="journal article" date="1980" name="Nature">
        <title>Structure of a family of rat amylase genes.</title>
        <authorList>
            <person name="McDonald R.J."/>
            <person name="Crerar M.M."/>
            <person name="Swain W.F."/>
            <person name="Pictet R.L."/>
            <person name="Thomas G."/>
            <person name="Rutter W.J."/>
        </authorList>
    </citation>
    <scope>NUCLEOTIDE SEQUENCE [MRNA] OF 5-508</scope>
</reference>
<reference key="3">
    <citation type="journal article" date="1981" name="Cancer">
        <title>Pancreas-specific genes: structure and expression.</title>
        <authorList>
            <person name="McDonald R.J."/>
            <person name="Crerar M.M."/>
            <person name="Swain W.F."/>
            <person name="Pictet R.L."/>
            <person name="Rutter W.J."/>
        </authorList>
    </citation>
    <scope>NUCLEOTIDE SEQUENCE [MRNA] OF 5-508</scope>
</reference>
<proteinExistence type="evidence at transcript level"/>
<name>AMYP_RAT</name>